<name>METE_SHEON</name>
<gene>
    <name evidence="1" type="primary">metE</name>
    <name type="ordered locus">SO_0818</name>
</gene>
<protein>
    <recommendedName>
        <fullName evidence="1">5-methyltetrahydropteroyltriglutamate--homocysteine methyltransferase</fullName>
        <ecNumber evidence="1">2.1.1.14</ecNumber>
    </recommendedName>
    <alternativeName>
        <fullName evidence="1">Cobalamin-independent methionine synthase</fullName>
    </alternativeName>
    <alternativeName>
        <fullName evidence="1">Methionine synthase, vitamin-B12 independent isozyme</fullName>
    </alternativeName>
</protein>
<evidence type="ECO:0000255" key="1">
    <source>
        <dbReference type="HAMAP-Rule" id="MF_00172"/>
    </source>
</evidence>
<sequence length="760" mass="84994">MQLNSLGFPRIGRRRELKFALEKYWRGESTQAELHEVARELRRTHWQWQVAAGIEQVPVGDFAFYDQVLTLSATLNAIPDRHRGEGAIDLDTLFRVARGRAPTGTDAPASEMTKYFNTNYHYLVPELKQDQVFSIAYEQFFDEVAEAQALGYKAKPVLLGPVSYLYLAKTVGQDFDKLSLLPNLLKAYAEILARFAAQGVTWVQLEEPILALELTHEWQAAISESYQALKTAQVKILLTSYYGSISHHQALVSALPVAGLHLDLVTAPEQLALFANALRPDQILSVGVVNGRNVWAAEVDLIVERIGSVARDLCSQDGSRLWIGTSCSLLHSPVDLEVETTLAPTLRQQLAFAKQKLLELANVRQLLQAPESVAAKEIVNTCLARREAKAQAADAKVIARVAALTPADYERVSEFTERQAVQQRKYRLPLLPTTTIGSFPQTPAIRGLRSRWRKGELSDAQYTEQLQQVTRDTIDRQLKLGIDVLVHGEAERNDMVEYFGEQLEGVGFTKNGWVQSYGSRCVKPPLIYGDVSRPKAMTVDWAVFAQSLTDKPVKGMLTGPVTILHWSFAREDISRDTIATQLALAIRDEVVDLQHAGIGIIQIDEPAFREGLPLKQSEWQAYLDWAVNAFKLSAAGVVDETQIHTHMCYSEFNDTIAAIAAMDADVITIETSRSRMELLNAFEDFEYPNEIGPGVYDIHSPNTPSVEAMVHLIEKAAQKVPVRQLWVNPDCGLKTRTWDEVEPALKNMVDATRELRRRLG</sequence>
<accession>Q8EIM0</accession>
<organism>
    <name type="scientific">Shewanella oneidensis (strain ATCC 700550 / JCM 31522 / CIP 106686 / LMG 19005 / NCIMB 14063 / MR-1)</name>
    <dbReference type="NCBI Taxonomy" id="211586"/>
    <lineage>
        <taxon>Bacteria</taxon>
        <taxon>Pseudomonadati</taxon>
        <taxon>Pseudomonadota</taxon>
        <taxon>Gammaproteobacteria</taxon>
        <taxon>Alteromonadales</taxon>
        <taxon>Shewanellaceae</taxon>
        <taxon>Shewanella</taxon>
    </lineage>
</organism>
<keyword id="KW-0028">Amino-acid biosynthesis</keyword>
<keyword id="KW-0479">Metal-binding</keyword>
<keyword id="KW-0486">Methionine biosynthesis</keyword>
<keyword id="KW-0489">Methyltransferase</keyword>
<keyword id="KW-1185">Reference proteome</keyword>
<keyword id="KW-0677">Repeat</keyword>
<keyword id="KW-0808">Transferase</keyword>
<keyword id="KW-0862">Zinc</keyword>
<dbReference type="EC" id="2.1.1.14" evidence="1"/>
<dbReference type="EMBL" id="AE014299">
    <property type="protein sequence ID" value="AAN53894.1"/>
    <property type="molecule type" value="Genomic_DNA"/>
</dbReference>
<dbReference type="RefSeq" id="NP_716449.1">
    <property type="nucleotide sequence ID" value="NC_004347.2"/>
</dbReference>
<dbReference type="RefSeq" id="WP_011071112.1">
    <property type="nucleotide sequence ID" value="NC_004347.2"/>
</dbReference>
<dbReference type="SMR" id="Q8EIM0"/>
<dbReference type="STRING" id="211586.SO_0818"/>
<dbReference type="PaxDb" id="211586-SO_0818"/>
<dbReference type="KEGG" id="son:SO_0818"/>
<dbReference type="PATRIC" id="fig|211586.12.peg.785"/>
<dbReference type="eggNOG" id="COG0620">
    <property type="taxonomic scope" value="Bacteria"/>
</dbReference>
<dbReference type="HOGENOM" id="CLU_013175_0_0_6"/>
<dbReference type="OrthoDB" id="244285at2"/>
<dbReference type="PhylomeDB" id="Q8EIM0"/>
<dbReference type="BioCyc" id="SONE211586:G1GMP-764-MONOMER"/>
<dbReference type="UniPathway" id="UPA00051">
    <property type="reaction ID" value="UER00082"/>
</dbReference>
<dbReference type="Proteomes" id="UP000008186">
    <property type="component" value="Chromosome"/>
</dbReference>
<dbReference type="GO" id="GO:0003871">
    <property type="term" value="F:5-methyltetrahydropteroyltriglutamate-homocysteine S-methyltransferase activity"/>
    <property type="evidence" value="ECO:0007669"/>
    <property type="project" value="UniProtKB-UniRule"/>
</dbReference>
<dbReference type="GO" id="GO:0008270">
    <property type="term" value="F:zinc ion binding"/>
    <property type="evidence" value="ECO:0007669"/>
    <property type="project" value="InterPro"/>
</dbReference>
<dbReference type="GO" id="GO:0009086">
    <property type="term" value="P:methionine biosynthetic process"/>
    <property type="evidence" value="ECO:0007669"/>
    <property type="project" value="UniProtKB-UniRule"/>
</dbReference>
<dbReference type="GO" id="GO:0032259">
    <property type="term" value="P:methylation"/>
    <property type="evidence" value="ECO:0007669"/>
    <property type="project" value="UniProtKB-KW"/>
</dbReference>
<dbReference type="CDD" id="cd03311">
    <property type="entry name" value="CIMS_C_terminal_like"/>
    <property type="match status" value="1"/>
</dbReference>
<dbReference type="CDD" id="cd03312">
    <property type="entry name" value="CIMS_N_terminal_like"/>
    <property type="match status" value="1"/>
</dbReference>
<dbReference type="FunFam" id="3.20.20.210:FF:000002">
    <property type="entry name" value="5-methyltetrahydropteroyltriglutamate--homocysteine methyltransferase"/>
    <property type="match status" value="1"/>
</dbReference>
<dbReference type="FunFam" id="3.20.20.210:FF:000003">
    <property type="entry name" value="5-methyltetrahydropteroyltriglutamate--homocysteine methyltransferase"/>
    <property type="match status" value="1"/>
</dbReference>
<dbReference type="Gene3D" id="3.20.20.210">
    <property type="match status" value="2"/>
</dbReference>
<dbReference type="HAMAP" id="MF_00172">
    <property type="entry name" value="Meth_synth"/>
    <property type="match status" value="1"/>
</dbReference>
<dbReference type="InterPro" id="IPR013215">
    <property type="entry name" value="Cbl-indep_Met_Synth_N"/>
</dbReference>
<dbReference type="InterPro" id="IPR006276">
    <property type="entry name" value="Cobalamin-indep_Met_synthase"/>
</dbReference>
<dbReference type="InterPro" id="IPR002629">
    <property type="entry name" value="Met_Synth_C/arc"/>
</dbReference>
<dbReference type="InterPro" id="IPR038071">
    <property type="entry name" value="UROD/MetE-like_sf"/>
</dbReference>
<dbReference type="NCBIfam" id="TIGR01371">
    <property type="entry name" value="met_syn_B12ind"/>
    <property type="match status" value="1"/>
</dbReference>
<dbReference type="NCBIfam" id="NF003556">
    <property type="entry name" value="PRK05222.1"/>
    <property type="match status" value="1"/>
</dbReference>
<dbReference type="PANTHER" id="PTHR30519">
    <property type="entry name" value="5-METHYLTETRAHYDROPTEROYLTRIGLUTAMATE--HOMOCYSTEINE METHYLTRANSFERASE"/>
    <property type="match status" value="1"/>
</dbReference>
<dbReference type="Pfam" id="PF08267">
    <property type="entry name" value="Meth_synt_1"/>
    <property type="match status" value="1"/>
</dbReference>
<dbReference type="Pfam" id="PF01717">
    <property type="entry name" value="Meth_synt_2"/>
    <property type="match status" value="1"/>
</dbReference>
<dbReference type="PIRSF" id="PIRSF000382">
    <property type="entry name" value="MeTrfase_B12_ind"/>
    <property type="match status" value="1"/>
</dbReference>
<dbReference type="SUPFAM" id="SSF51726">
    <property type="entry name" value="UROD/MetE-like"/>
    <property type="match status" value="2"/>
</dbReference>
<proteinExistence type="inferred from homology"/>
<comment type="function">
    <text evidence="1">Catalyzes the transfer of a methyl group from 5-methyltetrahydrofolate to homocysteine resulting in methionine formation.</text>
</comment>
<comment type="catalytic activity">
    <reaction evidence="1">
        <text>5-methyltetrahydropteroyltri-L-glutamate + L-homocysteine = tetrahydropteroyltri-L-glutamate + L-methionine</text>
        <dbReference type="Rhea" id="RHEA:21196"/>
        <dbReference type="ChEBI" id="CHEBI:57844"/>
        <dbReference type="ChEBI" id="CHEBI:58140"/>
        <dbReference type="ChEBI" id="CHEBI:58199"/>
        <dbReference type="ChEBI" id="CHEBI:58207"/>
        <dbReference type="EC" id="2.1.1.14"/>
    </reaction>
</comment>
<comment type="cofactor">
    <cofactor evidence="1">
        <name>Zn(2+)</name>
        <dbReference type="ChEBI" id="CHEBI:29105"/>
    </cofactor>
    <text evidence="1">Binds 1 zinc ion per subunit.</text>
</comment>
<comment type="pathway">
    <text evidence="1">Amino-acid biosynthesis; L-methionine biosynthesis via de novo pathway; L-methionine from L-homocysteine (MetE route): step 1/1.</text>
</comment>
<comment type="similarity">
    <text evidence="1">Belongs to the vitamin-B12 independent methionine synthase family.</text>
</comment>
<feature type="chain" id="PRO_0000098656" description="5-methyltetrahydropteroyltriglutamate--homocysteine methyltransferase">
    <location>
        <begin position="1"/>
        <end position="760"/>
    </location>
</feature>
<feature type="active site" description="Proton donor" evidence="1">
    <location>
        <position position="699"/>
    </location>
</feature>
<feature type="binding site" evidence="1">
    <location>
        <begin position="15"/>
        <end position="18"/>
    </location>
    <ligand>
        <name>5-methyltetrahydropteroyltri-L-glutamate</name>
        <dbReference type="ChEBI" id="CHEBI:58207"/>
    </ligand>
</feature>
<feature type="binding site" evidence="1">
    <location>
        <position position="114"/>
    </location>
    <ligand>
        <name>5-methyltetrahydropteroyltri-L-glutamate</name>
        <dbReference type="ChEBI" id="CHEBI:58207"/>
    </ligand>
</feature>
<feature type="binding site" evidence="1">
    <location>
        <begin position="436"/>
        <end position="438"/>
    </location>
    <ligand>
        <name>L-homocysteine</name>
        <dbReference type="ChEBI" id="CHEBI:58199"/>
    </ligand>
</feature>
<feature type="binding site" evidence="1">
    <location>
        <begin position="436"/>
        <end position="438"/>
    </location>
    <ligand>
        <name>L-methionine</name>
        <dbReference type="ChEBI" id="CHEBI:57844"/>
    </ligand>
</feature>
<feature type="binding site" evidence="1">
    <location>
        <position position="489"/>
    </location>
    <ligand>
        <name>L-homocysteine</name>
        <dbReference type="ChEBI" id="CHEBI:58199"/>
    </ligand>
</feature>
<feature type="binding site" evidence="1">
    <location>
        <position position="489"/>
    </location>
    <ligand>
        <name>L-methionine</name>
        <dbReference type="ChEBI" id="CHEBI:57844"/>
    </ligand>
</feature>
<feature type="binding site" evidence="1">
    <location>
        <begin position="520"/>
        <end position="521"/>
    </location>
    <ligand>
        <name>5-methyltetrahydropteroyltri-L-glutamate</name>
        <dbReference type="ChEBI" id="CHEBI:58207"/>
    </ligand>
</feature>
<feature type="binding site" evidence="1">
    <location>
        <position position="566"/>
    </location>
    <ligand>
        <name>5-methyltetrahydropteroyltri-L-glutamate</name>
        <dbReference type="ChEBI" id="CHEBI:58207"/>
    </ligand>
</feature>
<feature type="binding site" evidence="1">
    <location>
        <position position="604"/>
    </location>
    <ligand>
        <name>L-homocysteine</name>
        <dbReference type="ChEBI" id="CHEBI:58199"/>
    </ligand>
</feature>
<feature type="binding site" evidence="1">
    <location>
        <position position="604"/>
    </location>
    <ligand>
        <name>L-methionine</name>
        <dbReference type="ChEBI" id="CHEBI:57844"/>
    </ligand>
</feature>
<feature type="binding site" evidence="1">
    <location>
        <position position="610"/>
    </location>
    <ligand>
        <name>5-methyltetrahydropteroyltri-L-glutamate</name>
        <dbReference type="ChEBI" id="CHEBI:58207"/>
    </ligand>
</feature>
<feature type="binding site" evidence="1">
    <location>
        <position position="646"/>
    </location>
    <ligand>
        <name>Zn(2+)</name>
        <dbReference type="ChEBI" id="CHEBI:29105"/>
        <note>catalytic</note>
    </ligand>
</feature>
<feature type="binding site" evidence="1">
    <location>
        <position position="648"/>
    </location>
    <ligand>
        <name>Zn(2+)</name>
        <dbReference type="ChEBI" id="CHEBI:29105"/>
        <note>catalytic</note>
    </ligand>
</feature>
<feature type="binding site" evidence="1">
    <location>
        <position position="670"/>
    </location>
    <ligand>
        <name>Zn(2+)</name>
        <dbReference type="ChEBI" id="CHEBI:29105"/>
        <note>catalytic</note>
    </ligand>
</feature>
<feature type="binding site" evidence="1">
    <location>
        <position position="731"/>
    </location>
    <ligand>
        <name>Zn(2+)</name>
        <dbReference type="ChEBI" id="CHEBI:29105"/>
        <note>catalytic</note>
    </ligand>
</feature>
<reference key="1">
    <citation type="journal article" date="2002" name="Nat. Biotechnol.">
        <title>Genome sequence of the dissimilatory metal ion-reducing bacterium Shewanella oneidensis.</title>
        <authorList>
            <person name="Heidelberg J.F."/>
            <person name="Paulsen I.T."/>
            <person name="Nelson K.E."/>
            <person name="Gaidos E.J."/>
            <person name="Nelson W.C."/>
            <person name="Read T.D."/>
            <person name="Eisen J.A."/>
            <person name="Seshadri R."/>
            <person name="Ward N.L."/>
            <person name="Methe B.A."/>
            <person name="Clayton R.A."/>
            <person name="Meyer T."/>
            <person name="Tsapin A."/>
            <person name="Scott J."/>
            <person name="Beanan M.J."/>
            <person name="Brinkac L.M."/>
            <person name="Daugherty S.C."/>
            <person name="DeBoy R.T."/>
            <person name="Dodson R.J."/>
            <person name="Durkin A.S."/>
            <person name="Haft D.H."/>
            <person name="Kolonay J.F."/>
            <person name="Madupu R."/>
            <person name="Peterson J.D."/>
            <person name="Umayam L.A."/>
            <person name="White O."/>
            <person name="Wolf A.M."/>
            <person name="Vamathevan J.J."/>
            <person name="Weidman J.F."/>
            <person name="Impraim M."/>
            <person name="Lee K."/>
            <person name="Berry K.J."/>
            <person name="Lee C."/>
            <person name="Mueller J."/>
            <person name="Khouri H.M."/>
            <person name="Gill J."/>
            <person name="Utterback T.R."/>
            <person name="McDonald L.A."/>
            <person name="Feldblyum T.V."/>
            <person name="Smith H.O."/>
            <person name="Venter J.C."/>
            <person name="Nealson K.H."/>
            <person name="Fraser C.M."/>
        </authorList>
    </citation>
    <scope>NUCLEOTIDE SEQUENCE [LARGE SCALE GENOMIC DNA]</scope>
    <source>
        <strain>ATCC 700550 / JCM 31522 / CIP 106686 / LMG 19005 / NCIMB 14063 / MR-1</strain>
    </source>
</reference>